<keyword id="KW-0028">Amino-acid biosynthesis</keyword>
<keyword id="KW-0057">Aromatic amino acid biosynthesis</keyword>
<keyword id="KW-0521">NADP</keyword>
<keyword id="KW-0560">Oxidoreductase</keyword>
<keyword id="KW-1185">Reference proteome</keyword>
<sequence length="282" mass="31975">MVKHCIDQFCVFGNPINHTQSPYIHSLFSKQTGIVYEYSARLVPFKEFNSYVLNFFLNKGKGANITVPFKENAYVISNNLTIRAKMSRAVNTFKKLHNNKILGDNTDGIGVLHDLKRIKFIKSKFNRVLLIGAGGAARGIIFSLLSYGCSIVVLNRTITRALQLVEDFKNVGSISIFKEKFASNYSFNLIINATTINICQNSNLSTIKSLIHKDVYCYDINYSIKHKYTEFLLWCIKNGAICVSNGIGMLVSQAAHSFYLWYGILPETNSIICKLNRQFYML</sequence>
<feature type="chain" id="PRO_0000135997" description="Shikimate dehydrogenase (NADP(+))">
    <location>
        <begin position="1"/>
        <end position="282"/>
    </location>
</feature>
<feature type="active site" description="Proton acceptor" evidence="1">
    <location>
        <position position="70"/>
    </location>
</feature>
<feature type="binding site" evidence="1">
    <location>
        <begin position="19"/>
        <end position="21"/>
    </location>
    <ligand>
        <name>shikimate</name>
        <dbReference type="ChEBI" id="CHEBI:36208"/>
    </ligand>
</feature>
<feature type="binding site" evidence="1">
    <location>
        <position position="66"/>
    </location>
    <ligand>
        <name>shikimate</name>
        <dbReference type="ChEBI" id="CHEBI:36208"/>
    </ligand>
</feature>
<feature type="binding site" evidence="1">
    <location>
        <position position="91"/>
    </location>
    <ligand>
        <name>shikimate</name>
        <dbReference type="ChEBI" id="CHEBI:36208"/>
    </ligand>
</feature>
<feature type="binding site" evidence="1">
    <location>
        <position position="107"/>
    </location>
    <ligand>
        <name>shikimate</name>
        <dbReference type="ChEBI" id="CHEBI:36208"/>
    </ligand>
</feature>
<feature type="binding site" evidence="1">
    <location>
        <begin position="132"/>
        <end position="136"/>
    </location>
    <ligand>
        <name>NADP(+)</name>
        <dbReference type="ChEBI" id="CHEBI:58349"/>
    </ligand>
</feature>
<feature type="binding site" evidence="1">
    <location>
        <begin position="155"/>
        <end position="160"/>
    </location>
    <ligand>
        <name>NADP(+)</name>
        <dbReference type="ChEBI" id="CHEBI:58349"/>
    </ligand>
</feature>
<feature type="binding site" evidence="1">
    <location>
        <position position="224"/>
    </location>
    <ligand>
        <name>NADP(+)</name>
        <dbReference type="ChEBI" id="CHEBI:58349"/>
    </ligand>
</feature>
<feature type="binding site" evidence="1">
    <location>
        <position position="246"/>
    </location>
    <ligand>
        <name>NADP(+)</name>
        <dbReference type="ChEBI" id="CHEBI:58349"/>
    </ligand>
</feature>
<proteinExistence type="inferred from homology"/>
<reference key="1">
    <citation type="journal article" date="2003" name="Proc. Natl. Acad. Sci. U.S.A.">
        <title>Reductive genome evolution in Buchnera aphidicola.</title>
        <authorList>
            <person name="van Ham R.C.H.J."/>
            <person name="Kamerbeek J."/>
            <person name="Palacios C."/>
            <person name="Rausell C."/>
            <person name="Abascal F."/>
            <person name="Bastolla U."/>
            <person name="Fernandez J.M."/>
            <person name="Jimenez L."/>
            <person name="Postigo M."/>
            <person name="Silva F.J."/>
            <person name="Tamames J."/>
            <person name="Viguera E."/>
            <person name="Latorre A."/>
            <person name="Valencia A."/>
            <person name="Moran F."/>
            <person name="Moya A."/>
        </authorList>
    </citation>
    <scope>NUCLEOTIDE SEQUENCE [LARGE SCALE GENOMIC DNA]</scope>
    <source>
        <strain>Bp</strain>
    </source>
</reference>
<protein>
    <recommendedName>
        <fullName evidence="1">Shikimate dehydrogenase (NADP(+))</fullName>
        <shortName evidence="1">SDH</shortName>
        <ecNumber evidence="1">1.1.1.25</ecNumber>
    </recommendedName>
</protein>
<accession>P59414</accession>
<name>AROE_BUCBP</name>
<organism>
    <name type="scientific">Buchnera aphidicola subsp. Baizongia pistaciae (strain Bp)</name>
    <dbReference type="NCBI Taxonomy" id="224915"/>
    <lineage>
        <taxon>Bacteria</taxon>
        <taxon>Pseudomonadati</taxon>
        <taxon>Pseudomonadota</taxon>
        <taxon>Gammaproteobacteria</taxon>
        <taxon>Enterobacterales</taxon>
        <taxon>Erwiniaceae</taxon>
        <taxon>Buchnera</taxon>
    </lineage>
</organism>
<gene>
    <name evidence="1" type="primary">aroE</name>
    <name type="ordered locus">bbp_437</name>
</gene>
<evidence type="ECO:0000255" key="1">
    <source>
        <dbReference type="HAMAP-Rule" id="MF_00222"/>
    </source>
</evidence>
<dbReference type="EC" id="1.1.1.25" evidence="1"/>
<dbReference type="EMBL" id="AE016826">
    <property type="protein sequence ID" value="AAO27143.1"/>
    <property type="molecule type" value="Genomic_DNA"/>
</dbReference>
<dbReference type="RefSeq" id="WP_011091544.1">
    <property type="nucleotide sequence ID" value="NC_004545.1"/>
</dbReference>
<dbReference type="SMR" id="P59414"/>
<dbReference type="STRING" id="224915.bbp_437"/>
<dbReference type="KEGG" id="bab:bbp_437"/>
<dbReference type="eggNOG" id="COG0169">
    <property type="taxonomic scope" value="Bacteria"/>
</dbReference>
<dbReference type="HOGENOM" id="CLU_044063_2_1_6"/>
<dbReference type="OrthoDB" id="9776868at2"/>
<dbReference type="UniPathway" id="UPA00053">
    <property type="reaction ID" value="UER00087"/>
</dbReference>
<dbReference type="Proteomes" id="UP000000601">
    <property type="component" value="Chromosome"/>
</dbReference>
<dbReference type="GO" id="GO:0005829">
    <property type="term" value="C:cytosol"/>
    <property type="evidence" value="ECO:0007669"/>
    <property type="project" value="TreeGrafter"/>
</dbReference>
<dbReference type="GO" id="GO:0050661">
    <property type="term" value="F:NADP binding"/>
    <property type="evidence" value="ECO:0007669"/>
    <property type="project" value="InterPro"/>
</dbReference>
<dbReference type="GO" id="GO:0004764">
    <property type="term" value="F:shikimate 3-dehydrogenase (NADP+) activity"/>
    <property type="evidence" value="ECO:0007669"/>
    <property type="project" value="UniProtKB-UniRule"/>
</dbReference>
<dbReference type="GO" id="GO:0008652">
    <property type="term" value="P:amino acid biosynthetic process"/>
    <property type="evidence" value="ECO:0007669"/>
    <property type="project" value="UniProtKB-KW"/>
</dbReference>
<dbReference type="GO" id="GO:0009073">
    <property type="term" value="P:aromatic amino acid family biosynthetic process"/>
    <property type="evidence" value="ECO:0007669"/>
    <property type="project" value="UniProtKB-KW"/>
</dbReference>
<dbReference type="GO" id="GO:0009423">
    <property type="term" value="P:chorismate biosynthetic process"/>
    <property type="evidence" value="ECO:0007669"/>
    <property type="project" value="UniProtKB-UniRule"/>
</dbReference>
<dbReference type="GO" id="GO:0019632">
    <property type="term" value="P:shikimate metabolic process"/>
    <property type="evidence" value="ECO:0007669"/>
    <property type="project" value="InterPro"/>
</dbReference>
<dbReference type="CDD" id="cd01065">
    <property type="entry name" value="NAD_bind_Shikimate_DH"/>
    <property type="match status" value="1"/>
</dbReference>
<dbReference type="FunFam" id="3.40.50.10860:FF:000006">
    <property type="entry name" value="Shikimate dehydrogenase (NADP(+))"/>
    <property type="match status" value="1"/>
</dbReference>
<dbReference type="Gene3D" id="3.40.50.10860">
    <property type="entry name" value="Leucine Dehydrogenase, chain A, domain 1"/>
    <property type="match status" value="1"/>
</dbReference>
<dbReference type="Gene3D" id="3.40.50.720">
    <property type="entry name" value="NAD(P)-binding Rossmann-like Domain"/>
    <property type="match status" value="1"/>
</dbReference>
<dbReference type="HAMAP" id="MF_00222">
    <property type="entry name" value="Shikimate_DH_AroE"/>
    <property type="match status" value="1"/>
</dbReference>
<dbReference type="InterPro" id="IPR046346">
    <property type="entry name" value="Aminoacid_DH-like_N_sf"/>
</dbReference>
<dbReference type="InterPro" id="IPR036291">
    <property type="entry name" value="NAD(P)-bd_dom_sf"/>
</dbReference>
<dbReference type="InterPro" id="IPR011342">
    <property type="entry name" value="Shikimate_DH"/>
</dbReference>
<dbReference type="InterPro" id="IPR013708">
    <property type="entry name" value="Shikimate_DH-bd_N"/>
</dbReference>
<dbReference type="InterPro" id="IPR022893">
    <property type="entry name" value="Shikimate_DH_fam"/>
</dbReference>
<dbReference type="InterPro" id="IPR006151">
    <property type="entry name" value="Shikm_DH/Glu-tRNA_Rdtase"/>
</dbReference>
<dbReference type="NCBIfam" id="TIGR00507">
    <property type="entry name" value="aroE"/>
    <property type="match status" value="1"/>
</dbReference>
<dbReference type="NCBIfam" id="NF001310">
    <property type="entry name" value="PRK00258.1-2"/>
    <property type="match status" value="1"/>
</dbReference>
<dbReference type="PANTHER" id="PTHR21089:SF1">
    <property type="entry name" value="BIFUNCTIONAL 3-DEHYDROQUINATE DEHYDRATASE_SHIKIMATE DEHYDROGENASE, CHLOROPLASTIC"/>
    <property type="match status" value="1"/>
</dbReference>
<dbReference type="PANTHER" id="PTHR21089">
    <property type="entry name" value="SHIKIMATE DEHYDROGENASE"/>
    <property type="match status" value="1"/>
</dbReference>
<dbReference type="Pfam" id="PF01488">
    <property type="entry name" value="Shikimate_DH"/>
    <property type="match status" value="1"/>
</dbReference>
<dbReference type="Pfam" id="PF08501">
    <property type="entry name" value="Shikimate_dh_N"/>
    <property type="match status" value="1"/>
</dbReference>
<dbReference type="SUPFAM" id="SSF53223">
    <property type="entry name" value="Aminoacid dehydrogenase-like, N-terminal domain"/>
    <property type="match status" value="1"/>
</dbReference>
<dbReference type="SUPFAM" id="SSF51735">
    <property type="entry name" value="NAD(P)-binding Rossmann-fold domains"/>
    <property type="match status" value="1"/>
</dbReference>
<comment type="function">
    <text evidence="1">Involved in the biosynthesis of the chorismate, which leads to the biosynthesis of aromatic amino acids. Catalyzes the reversible NADPH linked reduction of 3-dehydroshikimate (DHSA) to yield shikimate (SA).</text>
</comment>
<comment type="catalytic activity">
    <reaction evidence="1">
        <text>shikimate + NADP(+) = 3-dehydroshikimate + NADPH + H(+)</text>
        <dbReference type="Rhea" id="RHEA:17737"/>
        <dbReference type="ChEBI" id="CHEBI:15378"/>
        <dbReference type="ChEBI" id="CHEBI:16630"/>
        <dbReference type="ChEBI" id="CHEBI:36208"/>
        <dbReference type="ChEBI" id="CHEBI:57783"/>
        <dbReference type="ChEBI" id="CHEBI:58349"/>
        <dbReference type="EC" id="1.1.1.25"/>
    </reaction>
</comment>
<comment type="pathway">
    <text evidence="1">Metabolic intermediate biosynthesis; chorismate biosynthesis; chorismate from D-erythrose 4-phosphate and phosphoenolpyruvate: step 4/7.</text>
</comment>
<comment type="subunit">
    <text evidence="1">Homodimer.</text>
</comment>
<comment type="similarity">
    <text evidence="1">Belongs to the shikimate dehydrogenase family.</text>
</comment>